<feature type="chain" id="PRO_0000047799" description="Gastrula zinc finger protein XlCGF52.1">
    <location>
        <begin position="1" status="less than"/>
        <end position="223" status="greater than"/>
    </location>
</feature>
<feature type="zinc finger region" description="C2H2-type 1" evidence="1">
    <location>
        <begin position="6"/>
        <end position="27"/>
    </location>
</feature>
<feature type="zinc finger region" description="C2H2-type 2" evidence="1">
    <location>
        <begin position="33"/>
        <end position="55"/>
    </location>
</feature>
<feature type="zinc finger region" description="C2H2-type 3" evidence="1">
    <location>
        <begin position="61"/>
        <end position="83"/>
    </location>
</feature>
<feature type="zinc finger region" description="C2H2-type 4" evidence="1">
    <location>
        <begin position="89"/>
        <end position="111"/>
    </location>
</feature>
<feature type="zinc finger region" description="C2H2-type 5" evidence="1">
    <location>
        <begin position="117"/>
        <end position="139"/>
    </location>
</feature>
<feature type="zinc finger region" description="C2H2-type 6" evidence="1">
    <location>
        <begin position="145"/>
        <end position="167"/>
    </location>
</feature>
<feature type="zinc finger region" description="C2H2-type 7" evidence="1">
    <location>
        <begin position="173"/>
        <end position="195"/>
    </location>
</feature>
<feature type="zinc finger region" description="C2H2-type 8" evidence="1">
    <location>
        <begin position="201"/>
        <end position="223"/>
    </location>
</feature>
<feature type="non-terminal residue">
    <location>
        <position position="1"/>
    </location>
</feature>
<feature type="non-terminal residue">
    <location>
        <position position="223"/>
    </location>
</feature>
<dbReference type="PIR" id="S06576">
    <property type="entry name" value="S06576"/>
</dbReference>
<dbReference type="SMR" id="P18727"/>
<dbReference type="Proteomes" id="UP000186698">
    <property type="component" value="Unplaced"/>
</dbReference>
<dbReference type="GO" id="GO:0005634">
    <property type="term" value="C:nucleus"/>
    <property type="evidence" value="ECO:0007669"/>
    <property type="project" value="UniProtKB-SubCell"/>
</dbReference>
<dbReference type="GO" id="GO:0000981">
    <property type="term" value="F:DNA-binding transcription factor activity, RNA polymerase II-specific"/>
    <property type="evidence" value="ECO:0000318"/>
    <property type="project" value="GO_Central"/>
</dbReference>
<dbReference type="GO" id="GO:0000978">
    <property type="term" value="F:RNA polymerase II cis-regulatory region sequence-specific DNA binding"/>
    <property type="evidence" value="ECO:0000318"/>
    <property type="project" value="GO_Central"/>
</dbReference>
<dbReference type="GO" id="GO:0008270">
    <property type="term" value="F:zinc ion binding"/>
    <property type="evidence" value="ECO:0007669"/>
    <property type="project" value="UniProtKB-KW"/>
</dbReference>
<dbReference type="GO" id="GO:0006357">
    <property type="term" value="P:regulation of transcription by RNA polymerase II"/>
    <property type="evidence" value="ECO:0000318"/>
    <property type="project" value="GO_Central"/>
</dbReference>
<dbReference type="FunFam" id="3.30.160.60:FF:000100">
    <property type="entry name" value="Zinc finger 45-like"/>
    <property type="match status" value="1"/>
</dbReference>
<dbReference type="FunFam" id="3.30.160.60:FF:000774">
    <property type="entry name" value="Zinc finger protein"/>
    <property type="match status" value="1"/>
</dbReference>
<dbReference type="FunFam" id="3.30.160.60:FF:000759">
    <property type="entry name" value="zinc finger protein 16"/>
    <property type="match status" value="1"/>
</dbReference>
<dbReference type="FunFam" id="3.30.160.60:FF:002343">
    <property type="entry name" value="Zinc finger protein 33A"/>
    <property type="match status" value="2"/>
</dbReference>
<dbReference type="FunFam" id="3.30.160.60:FF:002004">
    <property type="entry name" value="Zinc finger protein 473"/>
    <property type="match status" value="1"/>
</dbReference>
<dbReference type="FunFam" id="3.30.160.60:FF:000912">
    <property type="entry name" value="Zinc finger protein 660"/>
    <property type="match status" value="1"/>
</dbReference>
<dbReference type="FunFam" id="3.30.160.60:FF:001954">
    <property type="entry name" value="Zinc finger protein 787"/>
    <property type="match status" value="1"/>
</dbReference>
<dbReference type="Gene3D" id="3.30.160.60">
    <property type="entry name" value="Classic Zinc Finger"/>
    <property type="match status" value="8"/>
</dbReference>
<dbReference type="InterPro" id="IPR036236">
    <property type="entry name" value="Znf_C2H2_sf"/>
</dbReference>
<dbReference type="InterPro" id="IPR013087">
    <property type="entry name" value="Znf_C2H2_type"/>
</dbReference>
<dbReference type="PANTHER" id="PTHR24381:SF393">
    <property type="entry name" value="CHROMATIN-LINKED ADAPTOR FOR MSL PROTEINS, ISOFORM B"/>
    <property type="match status" value="1"/>
</dbReference>
<dbReference type="PANTHER" id="PTHR24381">
    <property type="entry name" value="ZINC FINGER PROTEIN"/>
    <property type="match status" value="1"/>
</dbReference>
<dbReference type="Pfam" id="PF00096">
    <property type="entry name" value="zf-C2H2"/>
    <property type="match status" value="8"/>
</dbReference>
<dbReference type="SMART" id="SM00355">
    <property type="entry name" value="ZnF_C2H2"/>
    <property type="match status" value="8"/>
</dbReference>
<dbReference type="SUPFAM" id="SSF57667">
    <property type="entry name" value="beta-beta-alpha zinc fingers"/>
    <property type="match status" value="5"/>
</dbReference>
<dbReference type="PROSITE" id="PS00028">
    <property type="entry name" value="ZINC_FINGER_C2H2_1"/>
    <property type="match status" value="7"/>
</dbReference>
<dbReference type="PROSITE" id="PS50157">
    <property type="entry name" value="ZINC_FINGER_C2H2_2"/>
    <property type="match status" value="8"/>
</dbReference>
<comment type="function">
    <text>May be involved in transcriptional regulation.</text>
</comment>
<comment type="subcellular location">
    <subcellularLocation>
        <location evidence="2">Nucleus</location>
    </subcellularLocation>
</comment>
<comment type="similarity">
    <text evidence="2">Belongs to the krueppel C2H2-type zinc-finger protein family.</text>
</comment>
<reference key="1">
    <citation type="journal article" date="1989" name="J. Mol. Biol.">
        <title>Second-order repeats in Xenopus laevis finger proteins.</title>
        <authorList>
            <person name="Nietfeld W."/>
            <person name="El-Baradi T."/>
            <person name="Mentzel H."/>
            <person name="Pieler T."/>
            <person name="Koester M."/>
            <person name="Poeting A."/>
            <person name="Knoechel W."/>
        </authorList>
    </citation>
    <scope>NUCLEOTIDE SEQUENCE</scope>
</reference>
<accession>P18727</accession>
<name>ZG52_XENLA</name>
<keyword id="KW-0238">DNA-binding</keyword>
<keyword id="KW-0479">Metal-binding</keyword>
<keyword id="KW-0539">Nucleus</keyword>
<keyword id="KW-1185">Reference proteome</keyword>
<keyword id="KW-0677">Repeat</keyword>
<keyword id="KW-0804">Transcription</keyword>
<keyword id="KW-0805">Transcription regulation</keyword>
<keyword id="KW-0862">Zinc</keyword>
<keyword id="KW-0863">Zinc-finger</keyword>
<sequence>TAENPFTCPECGKRFSQKSNCWHTEDHTGEKPFTCMECSKSFTVKSSLLSHQRVHTGEKPYTCTQCNKQFSHSAQLRAHISTHTGVGPFPCTECSKTFSLKHKLYKHQRIHTGEKPFQCLECGKSFSVKHGLLKHQRSHTGEKPYACSECQKTFAHKTTLMVHERIHTGERPYECNDCGKRFIHSTNLNCHQKIHSGEKPFTCTECGKSFSLKNKLVRHQKIH</sequence>
<proteinExistence type="inferred from homology"/>
<organism>
    <name type="scientific">Xenopus laevis</name>
    <name type="common">African clawed frog</name>
    <dbReference type="NCBI Taxonomy" id="8355"/>
    <lineage>
        <taxon>Eukaryota</taxon>
        <taxon>Metazoa</taxon>
        <taxon>Chordata</taxon>
        <taxon>Craniata</taxon>
        <taxon>Vertebrata</taxon>
        <taxon>Euteleostomi</taxon>
        <taxon>Amphibia</taxon>
        <taxon>Batrachia</taxon>
        <taxon>Anura</taxon>
        <taxon>Pipoidea</taxon>
        <taxon>Pipidae</taxon>
        <taxon>Xenopodinae</taxon>
        <taxon>Xenopus</taxon>
        <taxon>Xenopus</taxon>
    </lineage>
</organism>
<protein>
    <recommendedName>
        <fullName>Gastrula zinc finger protein XlCGF52.1</fullName>
    </recommendedName>
</protein>
<evidence type="ECO:0000255" key="1">
    <source>
        <dbReference type="PROSITE-ProRule" id="PRU00042"/>
    </source>
</evidence>
<evidence type="ECO:0000305" key="2"/>